<accession>Q8RX56</accession>
<accession>Q9FL49</accession>
<evidence type="ECO:0000255" key="1">
    <source>
        <dbReference type="PROSITE-ProRule" id="PRU00587"/>
    </source>
</evidence>
<evidence type="ECO:0000255" key="2">
    <source>
        <dbReference type="PROSITE-ProRule" id="PRU00588"/>
    </source>
</evidence>
<evidence type="ECO:0000269" key="3">
    <source>
    </source>
</evidence>
<evidence type="ECO:0000303" key="4">
    <source>
    </source>
</evidence>
<evidence type="ECO:0000305" key="5"/>
<evidence type="ECO:0000312" key="6">
    <source>
        <dbReference type="Araport" id="AT5G06970"/>
    </source>
</evidence>
<evidence type="ECO:0000312" key="7">
    <source>
        <dbReference type="EMBL" id="BAB11155.1"/>
    </source>
</evidence>
<gene>
    <name evidence="4" type="primary">PATROL1</name>
    <name evidence="6" type="ordered locus">At5g06970</name>
    <name evidence="7" type="ORF">MOJ9.14</name>
</gene>
<feature type="chain" id="PRO_0000443727" description="Protein unc-13 homolog">
    <location>
        <begin position="1"/>
        <end position="1101"/>
    </location>
</feature>
<feature type="domain" description="MHD1" evidence="1">
    <location>
        <begin position="663"/>
        <end position="804"/>
    </location>
</feature>
<feature type="domain" description="MHD2" evidence="2">
    <location>
        <begin position="941"/>
        <end position="1051"/>
    </location>
</feature>
<dbReference type="EMBL" id="AB010697">
    <property type="protein sequence ID" value="BAB11155.1"/>
    <property type="status" value="ALT_SEQ"/>
    <property type="molecule type" value="Genomic_DNA"/>
</dbReference>
<dbReference type="EMBL" id="CP002688">
    <property type="protein sequence ID" value="AED91091.1"/>
    <property type="molecule type" value="Genomic_DNA"/>
</dbReference>
<dbReference type="EMBL" id="AY090450">
    <property type="protein sequence ID" value="AAL91294.1"/>
    <property type="molecule type" value="mRNA"/>
</dbReference>
<dbReference type="EMBL" id="BT002724">
    <property type="protein sequence ID" value="AAO11640.1"/>
    <property type="molecule type" value="mRNA"/>
</dbReference>
<dbReference type="RefSeq" id="NP_196314.2">
    <property type="nucleotide sequence ID" value="NM_120779.3"/>
</dbReference>
<dbReference type="SMR" id="Q8RX56"/>
<dbReference type="FunCoup" id="Q8RX56">
    <property type="interactions" value="687"/>
</dbReference>
<dbReference type="IntAct" id="Q8RX56">
    <property type="interactions" value="2"/>
</dbReference>
<dbReference type="STRING" id="3702.Q8RX56"/>
<dbReference type="TCDB" id="8.A.244.1.1">
    <property type="family name" value="the proton atpase translocation control 1 (patrol1) family"/>
</dbReference>
<dbReference type="iPTMnet" id="Q8RX56"/>
<dbReference type="PaxDb" id="3702-AT5G06970.1"/>
<dbReference type="ProteomicsDB" id="245273"/>
<dbReference type="EnsemblPlants" id="AT5G06970.1">
    <property type="protein sequence ID" value="AT5G06970.1"/>
    <property type="gene ID" value="AT5G06970"/>
</dbReference>
<dbReference type="GeneID" id="830588"/>
<dbReference type="Gramene" id="AT5G06970.1">
    <property type="protein sequence ID" value="AT5G06970.1"/>
    <property type="gene ID" value="AT5G06970"/>
</dbReference>
<dbReference type="KEGG" id="ath:AT5G06970"/>
<dbReference type="Araport" id="AT5G06970"/>
<dbReference type="TAIR" id="AT5G06970">
    <property type="gene designation" value="PATROL1"/>
</dbReference>
<dbReference type="eggNOG" id="ENOG502QT32">
    <property type="taxonomic scope" value="Eukaryota"/>
</dbReference>
<dbReference type="HOGENOM" id="CLU_009468_2_0_1"/>
<dbReference type="InParanoid" id="Q8RX56"/>
<dbReference type="OMA" id="TIHHTCY"/>
<dbReference type="PhylomeDB" id="Q8RX56"/>
<dbReference type="CD-CODE" id="4299E36E">
    <property type="entry name" value="Nucleolus"/>
</dbReference>
<dbReference type="PRO" id="PR:Q8RX56"/>
<dbReference type="Proteomes" id="UP000006548">
    <property type="component" value="Chromosome 5"/>
</dbReference>
<dbReference type="ExpressionAtlas" id="Q8RX56">
    <property type="expression patterns" value="baseline and differential"/>
</dbReference>
<dbReference type="GO" id="GO:0005737">
    <property type="term" value="C:cytoplasm"/>
    <property type="evidence" value="ECO:0000314"/>
    <property type="project" value="TAIR"/>
</dbReference>
<dbReference type="GO" id="GO:0005886">
    <property type="term" value="C:plasma membrane"/>
    <property type="evidence" value="ECO:0000314"/>
    <property type="project" value="TAIR"/>
</dbReference>
<dbReference type="GO" id="GO:0009506">
    <property type="term" value="C:plasmodesma"/>
    <property type="evidence" value="ECO:0007005"/>
    <property type="project" value="TAIR"/>
</dbReference>
<dbReference type="GO" id="GO:0072659">
    <property type="term" value="P:protein localization to plasma membrane"/>
    <property type="evidence" value="ECO:0000315"/>
    <property type="project" value="TAIR"/>
</dbReference>
<dbReference type="GO" id="GO:0010118">
    <property type="term" value="P:stomatal movement"/>
    <property type="evidence" value="ECO:0000315"/>
    <property type="project" value="TAIR"/>
</dbReference>
<dbReference type="Gene3D" id="1.10.357.50">
    <property type="match status" value="1"/>
</dbReference>
<dbReference type="InterPro" id="IPR014770">
    <property type="entry name" value="Munc13_1"/>
</dbReference>
<dbReference type="InterPro" id="IPR014772">
    <property type="entry name" value="Munc13_dom-2"/>
</dbReference>
<dbReference type="InterPro" id="IPR008528">
    <property type="entry name" value="unc-13_homologue"/>
</dbReference>
<dbReference type="PANTHER" id="PTHR31280">
    <property type="entry name" value="PROTEIN UNC-13 HOMOLOG"/>
    <property type="match status" value="1"/>
</dbReference>
<dbReference type="PANTHER" id="PTHR31280:SF2">
    <property type="entry name" value="PROTEIN UNC-13 HOMOLOG"/>
    <property type="match status" value="1"/>
</dbReference>
<dbReference type="PROSITE" id="PS51258">
    <property type="entry name" value="MHD1"/>
    <property type="match status" value="1"/>
</dbReference>
<dbReference type="PROSITE" id="PS51259">
    <property type="entry name" value="MHD2"/>
    <property type="match status" value="1"/>
</dbReference>
<reference key="1">
    <citation type="journal article" date="1998" name="DNA Res.">
        <title>Structural analysis of Arabidopsis thaliana chromosome 5. V. Sequence features of the regions of 1,381,565 bp covered by twenty one physically assigned P1 and TAC clones.</title>
        <authorList>
            <person name="Kaneko T."/>
            <person name="Kotani H."/>
            <person name="Nakamura Y."/>
            <person name="Sato S."/>
            <person name="Asamizu E."/>
            <person name="Miyajima N."/>
            <person name="Tabata S."/>
        </authorList>
    </citation>
    <scope>NUCLEOTIDE SEQUENCE [LARGE SCALE GENOMIC DNA]</scope>
    <source>
        <strain>cv. Columbia</strain>
    </source>
</reference>
<reference key="2">
    <citation type="journal article" date="2017" name="Plant J.">
        <title>Araport11: a complete reannotation of the Arabidopsis thaliana reference genome.</title>
        <authorList>
            <person name="Cheng C.Y."/>
            <person name="Krishnakumar V."/>
            <person name="Chan A.P."/>
            <person name="Thibaud-Nissen F."/>
            <person name="Schobel S."/>
            <person name="Town C.D."/>
        </authorList>
    </citation>
    <scope>GENOME REANNOTATION</scope>
    <source>
        <strain>cv. Columbia</strain>
    </source>
</reference>
<reference key="3">
    <citation type="journal article" date="2003" name="Science">
        <title>Empirical analysis of transcriptional activity in the Arabidopsis genome.</title>
        <authorList>
            <person name="Yamada K."/>
            <person name="Lim J."/>
            <person name="Dale J.M."/>
            <person name="Chen H."/>
            <person name="Shinn P."/>
            <person name="Palm C.J."/>
            <person name="Southwick A.M."/>
            <person name="Wu H.C."/>
            <person name="Kim C.J."/>
            <person name="Nguyen M."/>
            <person name="Pham P.K."/>
            <person name="Cheuk R.F."/>
            <person name="Karlin-Newmann G."/>
            <person name="Liu S.X."/>
            <person name="Lam B."/>
            <person name="Sakano H."/>
            <person name="Wu T."/>
            <person name="Yu G."/>
            <person name="Miranda M."/>
            <person name="Quach H.L."/>
            <person name="Tripp M."/>
            <person name="Chang C.H."/>
            <person name="Lee J.M."/>
            <person name="Toriumi M.J."/>
            <person name="Chan M.M."/>
            <person name="Tang C.C."/>
            <person name="Onodera C.S."/>
            <person name="Deng J.M."/>
            <person name="Akiyama K."/>
            <person name="Ansari Y."/>
            <person name="Arakawa T."/>
            <person name="Banh J."/>
            <person name="Banno F."/>
            <person name="Bowser L."/>
            <person name="Brooks S.Y."/>
            <person name="Carninci P."/>
            <person name="Chao Q."/>
            <person name="Choy N."/>
            <person name="Enju A."/>
            <person name="Goldsmith A.D."/>
            <person name="Gurjal M."/>
            <person name="Hansen N.F."/>
            <person name="Hayashizaki Y."/>
            <person name="Johnson-Hopson C."/>
            <person name="Hsuan V.W."/>
            <person name="Iida K."/>
            <person name="Karnes M."/>
            <person name="Khan S."/>
            <person name="Koesema E."/>
            <person name="Ishida J."/>
            <person name="Jiang P.X."/>
            <person name="Jones T."/>
            <person name="Kawai J."/>
            <person name="Kamiya A."/>
            <person name="Meyers C."/>
            <person name="Nakajima M."/>
            <person name="Narusaka M."/>
            <person name="Seki M."/>
            <person name="Sakurai T."/>
            <person name="Satou M."/>
            <person name="Tamse R."/>
            <person name="Vaysberg M."/>
            <person name="Wallender E.K."/>
            <person name="Wong C."/>
            <person name="Yamamura Y."/>
            <person name="Yuan S."/>
            <person name="Shinozaki K."/>
            <person name="Davis R.W."/>
            <person name="Theologis A."/>
            <person name="Ecker J.R."/>
        </authorList>
    </citation>
    <scope>NUCLEOTIDE SEQUENCE [LARGE SCALE MRNA]</scope>
    <source>
        <strain>cv. Columbia</strain>
    </source>
</reference>
<reference key="4">
    <citation type="journal article" date="2013" name="Nat. Commun.">
        <title>A Munc13-like protein in Arabidopsis mediates H+-ATPase translocation that is essential for stomatal responses.</title>
        <authorList>
            <person name="Hashimoto-Sugimoto M."/>
            <person name="Higaki T."/>
            <person name="Yaeno T."/>
            <person name="Nagami A."/>
            <person name="Irie M."/>
            <person name="Fujimi M."/>
            <person name="Miyamoto M."/>
            <person name="Akita K."/>
            <person name="Negi J."/>
            <person name="Shirasu K."/>
            <person name="Hasezawa S."/>
            <person name="Iba K."/>
        </authorList>
    </citation>
    <scope>FUNCTION</scope>
    <scope>SUBCELLULAR LOCATION</scope>
    <scope>TISSUE SPECIFICITY</scope>
    <scope>DISRUPTION PHENOTYPE</scope>
</reference>
<protein>
    <recommendedName>
        <fullName evidence="5">Protein unc-13 homolog</fullName>
    </recommendedName>
    <alternativeName>
        <fullName evidence="4">Protein PROTON ATPASE TRANSLOCATION CONTROL 1</fullName>
    </alternativeName>
</protein>
<proteinExistence type="evidence at transcript level"/>
<comment type="function">
    <text evidence="3">Controls the tethering of the proton ATPase AHA1 to the plasma membrane. Is essential for stomatal opening in response to low concentration of carbon dioxide and light.</text>
</comment>
<comment type="subcellular location">
    <subcellularLocation>
        <location evidence="3">Cytoplasm</location>
    </subcellularLocation>
    <subcellularLocation>
        <location evidence="3">Cell membrane</location>
        <topology evidence="5">Peripheral membrane protein</topology>
    </subcellularLocation>
    <text evidence="3">Translocates reversibly between the cytoplasm and the plasma membrane depending on environmental conditions.</text>
</comment>
<comment type="tissue specificity">
    <text evidence="3">Expressed in roots, cotyledons, leaves, stems and flowers. Expressed in guard cells and mesophyll cells of leaves.</text>
</comment>
<comment type="disruption phenotype">
    <text evidence="3">Retarded growth due to impaired stomatal movement.</text>
</comment>
<comment type="similarity">
    <text evidence="5">Belongs to the unc-13 family.</text>
</comment>
<comment type="sequence caution" evidence="5">
    <conflict type="erroneous gene model prediction">
        <sequence resource="EMBL-CDS" id="BAB11155"/>
    </conflict>
</comment>
<keyword id="KW-1003">Cell membrane</keyword>
<keyword id="KW-0963">Cytoplasm</keyword>
<keyword id="KW-0472">Membrane</keyword>
<keyword id="KW-1185">Reference proteome</keyword>
<organism>
    <name type="scientific">Arabidopsis thaliana</name>
    <name type="common">Mouse-ear cress</name>
    <dbReference type="NCBI Taxonomy" id="3702"/>
    <lineage>
        <taxon>Eukaryota</taxon>
        <taxon>Viridiplantae</taxon>
        <taxon>Streptophyta</taxon>
        <taxon>Embryophyta</taxon>
        <taxon>Tracheophyta</taxon>
        <taxon>Spermatophyta</taxon>
        <taxon>Magnoliopsida</taxon>
        <taxon>eudicotyledons</taxon>
        <taxon>Gunneridae</taxon>
        <taxon>Pentapetalae</taxon>
        <taxon>rosids</taxon>
        <taxon>malvids</taxon>
        <taxon>Brassicales</taxon>
        <taxon>Brassicaceae</taxon>
        <taxon>Camelineae</taxon>
        <taxon>Arabidopsis</taxon>
    </lineage>
</organism>
<sequence>MEEENAVEILQRYRRDRRKLLDFMLAGSLIKKVIMPPGAVTLDDVDLDQVSVDYVINCAKKGGMLELAEAIRDYHDHIGLPYMNSVGTADEFFLATIPESSGSPPKRAPPPIPVLISSSSPMVTNPEWCESPSAPPLMRSESFDSPKAQELTVDDIDDFEDDDDLDEVGNFRISRRTANDAADLVPRLPSFATGITDDDLRETAFEILLACAGASGGLIVPSKEKKKEKSRSRLIKKLGRKSESVSQSQSSSGLVSLLEMMRGQMEISEAMDIRTRQGLLNALAGKVGKRMDSLLVPLELLCCVSRTEFSDKKAYLRWQKRQLNMLAEGLINNPVVGFGESGRKATDLKSLLLRIEESESLPSSAGEVQRAECLKSLREVAISLAERPARGDLTGEVCHWADGYHLNVRLYEKLLLCVFDILNDGKLTEEVEEILELLKSTWRVLGITETIHYTCYAWVLFRQYVITSERGLLRHAIQQLKKIPLKEQRGPQERLHLKTLKCRVDNEEISFLESFLSPIRSWADKQLGDYHLHFAEGSLVMEDTVTVAMITWRLLLEESDRAMHSNSSDREQIESYVLSSIKNTFTRMSLAIDRSDRNNEHHLALLAEETKKLMKKDSTIFMPILSQRHPQAIAFSASLIHKLYGNKLKPFLDGAEHLTEDAVSVFPAADSLEQYLLELMTSVCGEDTSGPYFKKLIPYEVESLSGTLVLRWINSQLGRILSWVERAYKQEHWDPISPQQRYGSSIVEVFRIVEETVDQFFALKVPMRSIELSALFRGIDNAFQVYTNHVMEKLASKDDLVPPVPVLTRYKKETAIKVFVKKELFDSKHLDERRSINIDVPATAMLCVQLNTLHYAVSQLSKLEDSMWLRWIAKKPREKIVIRKSMVEKSKSFNQKESFEGSRKDINAALDRICEFTGTKIIFCDLREPFIENLYKPNVSQSRLEGLIEALDTELGQLCSVIMEPLRDRIVTSLLQASLDGLLRVLLDGGASRVFHPSESKLLEEDVEVLKEFFISGGDGLPRGVVENQVARVRLVVKLHGYETRELIDDLRSRSSLEMQQGGKGKLGADTQTLVRVLCHRNDSEASQFLKKQYKIPRSHG</sequence>
<name>UNC13_ARATH</name>